<name>DOC2B_HUMAN</name>
<evidence type="ECO:0000250" key="1"/>
<evidence type="ECO:0000250" key="2">
    <source>
        <dbReference type="UniProtKB" id="P70169"/>
    </source>
</evidence>
<evidence type="ECO:0000255" key="3">
    <source>
        <dbReference type="PROSITE-ProRule" id="PRU00041"/>
    </source>
</evidence>
<evidence type="ECO:0000256" key="4">
    <source>
        <dbReference type="SAM" id="MobiDB-lite"/>
    </source>
</evidence>
<evidence type="ECO:0000269" key="5">
    <source>
    </source>
</evidence>
<evidence type="ECO:0000269" key="6">
    <source>
    </source>
</evidence>
<evidence type="ECO:0000269" key="7">
    <source>
    </source>
</evidence>
<evidence type="ECO:0000269" key="8">
    <source>
    </source>
</evidence>
<evidence type="ECO:0000305" key="9"/>
<evidence type="ECO:0000312" key="10">
    <source>
        <dbReference type="HGNC" id="HGNC:2986"/>
    </source>
</evidence>
<gene>
    <name evidence="10" type="primary">DOC2B</name>
    <name evidence="10" type="synonym">DOC2BL</name>
</gene>
<accession>Q14184</accession>
<accession>A0A087WZX8</accession>
<sequence>MTLRRRGEKATISIQEHMAIDVCPGPIRPIKQISDYFPRFPRGLPPDAGPRAAAPPDAPARPAVAGAGRRSPSDGAREDDEDVDQLFGAYGSSPGPSPGPSPARPPAKPPEDEPDADGYESDDCTALGTLDFSLLYDQENNALHCTITKAKGLKPMDHNGLADPYVKLHLLPGASKANKLRTKTLRNTLNPTWNETLTYYGITDEDMIRKTLRISVCDEDKFRHNEFIGETRVPLKKLKPNHTKTFSICLEKQLPVDKTEDKSLEERGRILISLKYSSQKQGLLVGIVRCAHLAAMDANGYSDPYVKTYLRPDVDKKSKHKTAVKKKTLNPEFNEEFCYEIKHGDLAKKSLEVTVWDYDIGKSNDFIGGVVLGIHAKGERLKHWFDCLKNKDKRIERWHTLTSELPGAVLSD</sequence>
<feature type="chain" id="PRO_0000079968" description="Double C2-like domain-containing protein beta">
    <location>
        <begin position="1"/>
        <end position="412"/>
    </location>
</feature>
<feature type="domain" description="C2 1" evidence="3">
    <location>
        <begin position="126"/>
        <end position="250"/>
    </location>
</feature>
<feature type="domain" description="C2 2" evidence="3">
    <location>
        <begin position="266"/>
        <end position="399"/>
    </location>
</feature>
<feature type="region of interest" description="Mediates interaction with DYNLT1" evidence="8">
    <location>
        <begin position="1"/>
        <end position="90"/>
    </location>
</feature>
<feature type="region of interest" description="Negatively regulates targeting to plasma membrane" evidence="1">
    <location>
        <begin position="1"/>
        <end position="36"/>
    </location>
</feature>
<feature type="region of interest" description="Disordered" evidence="4">
    <location>
        <begin position="38"/>
        <end position="123"/>
    </location>
</feature>
<feature type="region of interest" description="Mediates interaction with STXBP3" evidence="1">
    <location>
        <begin position="257"/>
        <end position="375"/>
    </location>
</feature>
<feature type="compositionally biased region" description="Low complexity" evidence="4">
    <location>
        <begin position="49"/>
        <end position="70"/>
    </location>
</feature>
<feature type="compositionally biased region" description="Pro residues" evidence="4">
    <location>
        <begin position="95"/>
        <end position="108"/>
    </location>
</feature>
<feature type="compositionally biased region" description="Acidic residues" evidence="4">
    <location>
        <begin position="112"/>
        <end position="123"/>
    </location>
</feature>
<feature type="binding site" evidence="3">
    <location>
        <position position="157"/>
    </location>
    <ligand>
        <name>Ca(2+)</name>
        <dbReference type="ChEBI" id="CHEBI:29108"/>
        <label>1</label>
    </ligand>
</feature>
<feature type="binding site" evidence="3">
    <location>
        <position position="163"/>
    </location>
    <ligand>
        <name>Ca(2+)</name>
        <dbReference type="ChEBI" id="CHEBI:29108"/>
        <label>1</label>
    </ligand>
</feature>
<feature type="binding site" evidence="3">
    <location>
        <position position="218"/>
    </location>
    <ligand>
        <name>Ca(2+)</name>
        <dbReference type="ChEBI" id="CHEBI:29108"/>
        <label>1</label>
    </ligand>
</feature>
<feature type="binding site" evidence="3">
    <location>
        <position position="220"/>
    </location>
    <ligand>
        <name>Ca(2+)</name>
        <dbReference type="ChEBI" id="CHEBI:29108"/>
        <label>1</label>
    </ligand>
</feature>
<feature type="binding site" evidence="3">
    <location>
        <position position="297"/>
    </location>
    <ligand>
        <name>Ca(2+)</name>
        <dbReference type="ChEBI" id="CHEBI:29108"/>
        <label>2</label>
    </ligand>
</feature>
<feature type="binding site" evidence="3">
    <location>
        <position position="297"/>
    </location>
    <ligand>
        <name>Ca(2+)</name>
        <dbReference type="ChEBI" id="CHEBI:29108"/>
        <label>3</label>
    </ligand>
</feature>
<feature type="binding site" evidence="3">
    <location>
        <position position="303"/>
    </location>
    <ligand>
        <name>Ca(2+)</name>
        <dbReference type="ChEBI" id="CHEBI:29108"/>
        <label>2</label>
    </ligand>
</feature>
<feature type="binding site" evidence="3">
    <location>
        <position position="357"/>
    </location>
    <ligand>
        <name>Ca(2+)</name>
        <dbReference type="ChEBI" id="CHEBI:29108"/>
        <label>2</label>
    </ligand>
</feature>
<feature type="binding site" evidence="3">
    <location>
        <position position="357"/>
    </location>
    <ligand>
        <name>Ca(2+)</name>
        <dbReference type="ChEBI" id="CHEBI:29108"/>
        <label>3</label>
    </ligand>
</feature>
<feature type="binding site" evidence="3">
    <location>
        <position position="359"/>
    </location>
    <ligand>
        <name>Ca(2+)</name>
        <dbReference type="ChEBI" id="CHEBI:29108"/>
        <label>2</label>
    </ligand>
</feature>
<feature type="binding site" evidence="3">
    <location>
        <position position="359"/>
    </location>
    <ligand>
        <name>Ca(2+)</name>
        <dbReference type="ChEBI" id="CHEBI:29108"/>
        <label>3</label>
    </ligand>
</feature>
<feature type="binding site" evidence="3">
    <location>
        <position position="365"/>
    </location>
    <ligand>
        <name>Ca(2+)</name>
        <dbReference type="ChEBI" id="CHEBI:29108"/>
        <label>3</label>
    </ligand>
</feature>
<feature type="modified residue" description="Phosphoserine" evidence="2">
    <location>
        <position position="411"/>
    </location>
</feature>
<feature type="sequence variant" id="VAR_065743" description="In a patient with amyotrophic lateral sclerosis; dbSNP:rs369343321." evidence="6">
    <original>R</original>
    <variation>L</variation>
    <location>
        <position position="209"/>
    </location>
</feature>
<feature type="sequence conflict" description="In Ref. 1; BAA11107." evidence="9" ref="1">
    <original>S</original>
    <variation>N</variation>
    <location>
        <position position="247"/>
    </location>
</feature>
<organism>
    <name type="scientific">Homo sapiens</name>
    <name type="common">Human</name>
    <dbReference type="NCBI Taxonomy" id="9606"/>
    <lineage>
        <taxon>Eukaryota</taxon>
        <taxon>Metazoa</taxon>
        <taxon>Chordata</taxon>
        <taxon>Craniata</taxon>
        <taxon>Vertebrata</taxon>
        <taxon>Euteleostomi</taxon>
        <taxon>Mammalia</taxon>
        <taxon>Eutheria</taxon>
        <taxon>Euarchontoglires</taxon>
        <taxon>Primates</taxon>
        <taxon>Haplorrhini</taxon>
        <taxon>Catarrhini</taxon>
        <taxon>Hominidae</taxon>
        <taxon>Homo</taxon>
    </lineage>
</organism>
<dbReference type="EMBL" id="D70830">
    <property type="protein sequence ID" value="BAA11107.1"/>
    <property type="molecule type" value="mRNA"/>
</dbReference>
<dbReference type="EMBL" id="AC108004">
    <property type="status" value="NOT_ANNOTATED_CDS"/>
    <property type="molecule type" value="Genomic_DNA"/>
</dbReference>
<dbReference type="EMBL" id="AC240565">
    <property type="status" value="NOT_ANNOTATED_CDS"/>
    <property type="molecule type" value="Genomic_DNA"/>
</dbReference>
<dbReference type="EMBL" id="KF511233">
    <property type="status" value="NOT_ANNOTATED_CDS"/>
    <property type="molecule type" value="Genomic_DNA"/>
</dbReference>
<dbReference type="EMBL" id="CH471108">
    <property type="protein sequence ID" value="EAW90677.1"/>
    <property type="molecule type" value="Genomic_DNA"/>
</dbReference>
<dbReference type="CCDS" id="CCDS73934.1"/>
<dbReference type="RefSeq" id="NP_003576.2">
    <property type="nucleotide sequence ID" value="NM_003585.5"/>
</dbReference>
<dbReference type="SMR" id="Q14184"/>
<dbReference type="BioGRID" id="114025">
    <property type="interactions" value="9"/>
</dbReference>
<dbReference type="FunCoup" id="Q14184">
    <property type="interactions" value="153"/>
</dbReference>
<dbReference type="IntAct" id="Q14184">
    <property type="interactions" value="7"/>
</dbReference>
<dbReference type="MINT" id="Q14184"/>
<dbReference type="STRING" id="9606.ENSP00000482950"/>
<dbReference type="GlyGen" id="Q14184">
    <property type="glycosylation" value="1 site, 1 O-linked glycan (1 site)"/>
</dbReference>
<dbReference type="iPTMnet" id="Q14184"/>
<dbReference type="PhosphoSitePlus" id="Q14184"/>
<dbReference type="BioMuta" id="DOC2B"/>
<dbReference type="DMDM" id="51701386"/>
<dbReference type="MassIVE" id="Q14184"/>
<dbReference type="PaxDb" id="9606-ENSP00000482950"/>
<dbReference type="PeptideAtlas" id="Q14184"/>
<dbReference type="ProteomicsDB" id="59902"/>
<dbReference type="Antibodypedia" id="71704">
    <property type="antibodies" value="75 antibodies from 20 providers"/>
</dbReference>
<dbReference type="DNASU" id="8447"/>
<dbReference type="Ensembl" id="ENST00000613549.3">
    <property type="protein sequence ID" value="ENSP00000482950.1"/>
    <property type="gene ID" value="ENSG00000272636.5"/>
</dbReference>
<dbReference type="GeneID" id="8447"/>
<dbReference type="KEGG" id="hsa:8447"/>
<dbReference type="MANE-Select" id="ENST00000613549.3">
    <property type="protein sequence ID" value="ENSP00000482950.1"/>
    <property type="RefSeq nucleotide sequence ID" value="NM_003585.5"/>
    <property type="RefSeq protein sequence ID" value="NP_003576.2"/>
</dbReference>
<dbReference type="UCSC" id="uc010vpx.3">
    <property type="organism name" value="human"/>
</dbReference>
<dbReference type="AGR" id="HGNC:2986"/>
<dbReference type="CTD" id="8447"/>
<dbReference type="DisGeNET" id="8447"/>
<dbReference type="GeneCards" id="DOC2B"/>
<dbReference type="HGNC" id="HGNC:2986">
    <property type="gene designation" value="DOC2B"/>
</dbReference>
<dbReference type="HPA" id="ENSG00000272636">
    <property type="expression patterns" value="Tissue enhanced (brain, retina)"/>
</dbReference>
<dbReference type="MIM" id="604568">
    <property type="type" value="gene"/>
</dbReference>
<dbReference type="neXtProt" id="NX_Q14184"/>
<dbReference type="OpenTargets" id="ENSG00000272636"/>
<dbReference type="PharmGKB" id="PA27452"/>
<dbReference type="VEuPathDB" id="HostDB:ENSG00000272636"/>
<dbReference type="eggNOG" id="KOG1013">
    <property type="taxonomic scope" value="Eukaryota"/>
</dbReference>
<dbReference type="GeneTree" id="ENSGT00940000156758"/>
<dbReference type="InParanoid" id="Q14184"/>
<dbReference type="OMA" id="DKKMERW"/>
<dbReference type="PAN-GO" id="Q14184">
    <property type="GO annotations" value="4 GO annotations based on evolutionary models"/>
</dbReference>
<dbReference type="PhylomeDB" id="Q14184"/>
<dbReference type="TreeFam" id="TF351844"/>
<dbReference type="PathwayCommons" id="Q14184"/>
<dbReference type="SignaLink" id="Q14184"/>
<dbReference type="BioGRID-ORCS" id="8447">
    <property type="hits" value="5 hits in 375 CRISPR screens"/>
</dbReference>
<dbReference type="ChiTaRS" id="DOC2B">
    <property type="organism name" value="human"/>
</dbReference>
<dbReference type="GeneWiki" id="DOC2B"/>
<dbReference type="GenomeRNAi" id="8447"/>
<dbReference type="Pharos" id="Q14184">
    <property type="development level" value="Tbio"/>
</dbReference>
<dbReference type="PRO" id="PR:Q14184"/>
<dbReference type="Proteomes" id="UP000005640">
    <property type="component" value="Chromosome 17"/>
</dbReference>
<dbReference type="RNAct" id="Q14184">
    <property type="molecule type" value="protein"/>
</dbReference>
<dbReference type="Bgee" id="ENSG00000272636">
    <property type="expression patterns" value="Expressed in right hemisphere of cerebellum and 99 other cell types or tissues"/>
</dbReference>
<dbReference type="GO" id="GO:0005737">
    <property type="term" value="C:cytoplasm"/>
    <property type="evidence" value="ECO:0000250"/>
    <property type="project" value="UniProtKB"/>
</dbReference>
<dbReference type="GO" id="GO:0005886">
    <property type="term" value="C:plasma membrane"/>
    <property type="evidence" value="ECO:0000250"/>
    <property type="project" value="UniProtKB"/>
</dbReference>
<dbReference type="GO" id="GO:0098793">
    <property type="term" value="C:presynapse"/>
    <property type="evidence" value="ECO:0007669"/>
    <property type="project" value="GOC"/>
</dbReference>
<dbReference type="GO" id="GO:0045202">
    <property type="term" value="C:synapse"/>
    <property type="evidence" value="ECO:0000318"/>
    <property type="project" value="GO_Central"/>
</dbReference>
<dbReference type="GO" id="GO:0005509">
    <property type="term" value="F:calcium ion binding"/>
    <property type="evidence" value="ECO:0007669"/>
    <property type="project" value="Ensembl"/>
</dbReference>
<dbReference type="GO" id="GO:0005544">
    <property type="term" value="F:calcium-dependent phospholipid binding"/>
    <property type="evidence" value="ECO:0000250"/>
    <property type="project" value="UniProtKB"/>
</dbReference>
<dbReference type="GO" id="GO:0019905">
    <property type="term" value="F:syntaxin binding"/>
    <property type="evidence" value="ECO:0007669"/>
    <property type="project" value="Ensembl"/>
</dbReference>
<dbReference type="GO" id="GO:0048791">
    <property type="term" value="P:calcium ion-regulated exocytosis of neurotransmitter"/>
    <property type="evidence" value="ECO:0000250"/>
    <property type="project" value="UniProtKB"/>
</dbReference>
<dbReference type="GO" id="GO:0099502">
    <property type="term" value="P:calcium-dependent activation of synaptic vesicle fusion"/>
    <property type="evidence" value="ECO:0000318"/>
    <property type="project" value="GO_Central"/>
</dbReference>
<dbReference type="GO" id="GO:0045956">
    <property type="term" value="P:positive regulation of calcium ion-dependent exocytosis"/>
    <property type="evidence" value="ECO:0000250"/>
    <property type="project" value="UniProtKB"/>
</dbReference>
<dbReference type="GO" id="GO:0032024">
    <property type="term" value="P:positive regulation of insulin secretion"/>
    <property type="evidence" value="ECO:0000250"/>
    <property type="project" value="UniProtKB"/>
</dbReference>
<dbReference type="GO" id="GO:0031340">
    <property type="term" value="P:positive regulation of vesicle fusion"/>
    <property type="evidence" value="ECO:0000250"/>
    <property type="project" value="UniProtKB"/>
</dbReference>
<dbReference type="GO" id="GO:0008104">
    <property type="term" value="P:protein localization"/>
    <property type="evidence" value="ECO:0000250"/>
    <property type="project" value="UniProtKB"/>
</dbReference>
<dbReference type="GO" id="GO:0061669">
    <property type="term" value="P:spontaneous neurotransmitter secretion"/>
    <property type="evidence" value="ECO:0007669"/>
    <property type="project" value="Ensembl"/>
</dbReference>
<dbReference type="CDD" id="cd04035">
    <property type="entry name" value="C2A_Rabphilin_Doc2"/>
    <property type="match status" value="1"/>
</dbReference>
<dbReference type="CDD" id="cd08384">
    <property type="entry name" value="C2B_Rabphilin_Doc2"/>
    <property type="match status" value="1"/>
</dbReference>
<dbReference type="FunFam" id="2.60.40.150:FF:000032">
    <property type="entry name" value="Double c2-like domain-containing"/>
    <property type="match status" value="1"/>
</dbReference>
<dbReference type="FunFam" id="2.60.40.150:FF:000023">
    <property type="entry name" value="Double C2-like domain-containing protein"/>
    <property type="match status" value="1"/>
</dbReference>
<dbReference type="Gene3D" id="2.60.40.150">
    <property type="entry name" value="C2 domain"/>
    <property type="match status" value="2"/>
</dbReference>
<dbReference type="InterPro" id="IPR000008">
    <property type="entry name" value="C2_dom"/>
</dbReference>
<dbReference type="InterPro" id="IPR035892">
    <property type="entry name" value="C2_domain_sf"/>
</dbReference>
<dbReference type="InterPro" id="IPR014638">
    <property type="entry name" value="Doc2"/>
</dbReference>
<dbReference type="InterPro" id="IPR043566">
    <property type="entry name" value="Rabphilin/DOC2/Noc2"/>
</dbReference>
<dbReference type="InterPro" id="IPR047022">
    <property type="entry name" value="Rabphilin_Doc2_C2A"/>
</dbReference>
<dbReference type="InterPro" id="IPR001565">
    <property type="entry name" value="Synaptotagmin"/>
</dbReference>
<dbReference type="PANTHER" id="PTHR45729:SF9">
    <property type="entry name" value="DOUBLE C2-LIKE DOMAIN-CONTAINING PROTEIN BETA"/>
    <property type="match status" value="1"/>
</dbReference>
<dbReference type="PANTHER" id="PTHR45729">
    <property type="entry name" value="RABPHILIN, ISOFORM A"/>
    <property type="match status" value="1"/>
</dbReference>
<dbReference type="Pfam" id="PF00168">
    <property type="entry name" value="C2"/>
    <property type="match status" value="2"/>
</dbReference>
<dbReference type="PIRSF" id="PIRSF036931">
    <property type="entry name" value="Doc2"/>
    <property type="match status" value="1"/>
</dbReference>
<dbReference type="PRINTS" id="PR00360">
    <property type="entry name" value="C2DOMAIN"/>
</dbReference>
<dbReference type="PRINTS" id="PR00399">
    <property type="entry name" value="SYNAPTOTAGMN"/>
</dbReference>
<dbReference type="SMART" id="SM00239">
    <property type="entry name" value="C2"/>
    <property type="match status" value="2"/>
</dbReference>
<dbReference type="SUPFAM" id="SSF49562">
    <property type="entry name" value="C2 domain (Calcium/lipid-binding domain, CaLB)"/>
    <property type="match status" value="2"/>
</dbReference>
<dbReference type="PROSITE" id="PS50004">
    <property type="entry name" value="C2"/>
    <property type="match status" value="2"/>
</dbReference>
<reference key="1">
    <citation type="journal article" date="1995" name="Biochem. Biophys. Res. Commun.">
        <title>Molecular cloning of an isoform of Doc2 having two C2-like domains.</title>
        <authorList>
            <person name="Sakaguchi G."/>
            <person name="Orita S."/>
            <person name="Maeda M."/>
            <person name="Igarashi H."/>
            <person name="Takai Y."/>
        </authorList>
    </citation>
    <scope>NUCLEOTIDE SEQUENCE [MRNA]</scope>
    <scope>TISSUE SPECIFICITY</scope>
</reference>
<reference key="2">
    <citation type="journal article" date="2006" name="Nature">
        <title>DNA sequence of human chromosome 17 and analysis of rearrangement in the human lineage.</title>
        <authorList>
            <person name="Zody M.C."/>
            <person name="Garber M."/>
            <person name="Adams D.J."/>
            <person name="Sharpe T."/>
            <person name="Harrow J."/>
            <person name="Lupski J.R."/>
            <person name="Nicholson C."/>
            <person name="Searle S.M."/>
            <person name="Wilming L."/>
            <person name="Young S.K."/>
            <person name="Abouelleil A."/>
            <person name="Allen N.R."/>
            <person name="Bi W."/>
            <person name="Bloom T."/>
            <person name="Borowsky M.L."/>
            <person name="Bugalter B.E."/>
            <person name="Butler J."/>
            <person name="Chang J.L."/>
            <person name="Chen C.-K."/>
            <person name="Cook A."/>
            <person name="Corum B."/>
            <person name="Cuomo C.A."/>
            <person name="de Jong P.J."/>
            <person name="DeCaprio D."/>
            <person name="Dewar K."/>
            <person name="FitzGerald M."/>
            <person name="Gilbert J."/>
            <person name="Gibson R."/>
            <person name="Gnerre S."/>
            <person name="Goldstein S."/>
            <person name="Grafham D.V."/>
            <person name="Grocock R."/>
            <person name="Hafez N."/>
            <person name="Hagopian D.S."/>
            <person name="Hart E."/>
            <person name="Norman C.H."/>
            <person name="Humphray S."/>
            <person name="Jaffe D.B."/>
            <person name="Jones M."/>
            <person name="Kamal M."/>
            <person name="Khodiyar V.K."/>
            <person name="LaButti K."/>
            <person name="Laird G."/>
            <person name="Lehoczky J."/>
            <person name="Liu X."/>
            <person name="Lokyitsang T."/>
            <person name="Loveland J."/>
            <person name="Lui A."/>
            <person name="Macdonald P."/>
            <person name="Major J.E."/>
            <person name="Matthews L."/>
            <person name="Mauceli E."/>
            <person name="McCarroll S.A."/>
            <person name="Mihalev A.H."/>
            <person name="Mudge J."/>
            <person name="Nguyen C."/>
            <person name="Nicol R."/>
            <person name="O'Leary S.B."/>
            <person name="Osoegawa K."/>
            <person name="Schwartz D.C."/>
            <person name="Shaw-Smith C."/>
            <person name="Stankiewicz P."/>
            <person name="Steward C."/>
            <person name="Swarbreck D."/>
            <person name="Venkataraman V."/>
            <person name="Whittaker C.A."/>
            <person name="Yang X."/>
            <person name="Zimmer A.R."/>
            <person name="Bradley A."/>
            <person name="Hubbard T."/>
            <person name="Birren B.W."/>
            <person name="Rogers J."/>
            <person name="Lander E.S."/>
            <person name="Nusbaum C."/>
        </authorList>
    </citation>
    <scope>NUCLEOTIDE SEQUENCE [LARGE SCALE GENOMIC DNA]</scope>
</reference>
<reference key="3">
    <citation type="submission" date="2005-09" db="EMBL/GenBank/DDBJ databases">
        <authorList>
            <person name="Mural R.J."/>
            <person name="Istrail S."/>
            <person name="Sutton G.G."/>
            <person name="Florea L."/>
            <person name="Halpern A.L."/>
            <person name="Mobarry C.M."/>
            <person name="Lippert R."/>
            <person name="Walenz B."/>
            <person name="Shatkay H."/>
            <person name="Dew I."/>
            <person name="Miller J.R."/>
            <person name="Flanigan M.J."/>
            <person name="Edwards N.J."/>
            <person name="Bolanos R."/>
            <person name="Fasulo D."/>
            <person name="Halldorsson B.V."/>
            <person name="Hannenhalli S."/>
            <person name="Turner R."/>
            <person name="Yooseph S."/>
            <person name="Lu F."/>
            <person name="Nusskern D.R."/>
            <person name="Shue B.C."/>
            <person name="Zheng X.H."/>
            <person name="Zhong F."/>
            <person name="Delcher A.L."/>
            <person name="Huson D.H."/>
            <person name="Kravitz S.A."/>
            <person name="Mouchard L."/>
            <person name="Reinert K."/>
            <person name="Remington K.A."/>
            <person name="Clark A.G."/>
            <person name="Waterman M.S."/>
            <person name="Eichler E.E."/>
            <person name="Adams M.D."/>
            <person name="Hunkapiller M.W."/>
            <person name="Myers E.W."/>
            <person name="Venter J.C."/>
        </authorList>
    </citation>
    <scope>NUCLEOTIDE SEQUENCE [LARGE SCALE GENOMIC DNA]</scope>
</reference>
<reference key="4">
    <citation type="journal article" date="1998" name="J. Biol. Chem.">
        <title>Interaction of Doc2 with tctex-1, a light chain of cytoplasmic dynein. Implication in dynein-dependent vesicle transport.</title>
        <authorList>
            <person name="Nagano F."/>
            <person name="Orita S."/>
            <person name="Sasaki T."/>
            <person name="Naito A."/>
            <person name="Sakaguchi G."/>
            <person name="Maeda M."/>
            <person name="Watanabe T."/>
            <person name="Kominami E."/>
            <person name="Uchiyama Y."/>
            <person name="Takai Y."/>
        </authorList>
    </citation>
    <scope>FUNCTION</scope>
    <scope>INTERACTION WITH DYNLT1</scope>
</reference>
<reference key="5">
    <citation type="journal article" date="2007" name="J. Biol. Chem.">
        <title>Doc2beta is a novel Munc18c-interacting partner and positive effector of syntaxin 4-mediated exocytosis.</title>
        <authorList>
            <person name="Ke B."/>
            <person name="Oh E."/>
            <person name="Thurmond D.C."/>
        </authorList>
    </citation>
    <scope>TISSUE SPECIFICITY</scope>
</reference>
<reference key="6">
    <citation type="journal article" date="2011" name="Arch. Neurol.">
        <title>Resequencing of 29 candidate genes in patients with familial and sporadic amyotrophic lateral sclerosis.</title>
        <authorList>
            <person name="Daoud H."/>
            <person name="Valdmanis P.N."/>
            <person name="Gros-Louis F."/>
            <person name="Belzil V."/>
            <person name="Spiegelman D."/>
            <person name="Henrion E."/>
            <person name="Diallo O."/>
            <person name="Desjarlais A."/>
            <person name="Gauthier J."/>
            <person name="Camu W."/>
            <person name="Dion P.A."/>
            <person name="Rouleau G.A."/>
        </authorList>
    </citation>
    <scope>VARIANT LEU-209</scope>
</reference>
<proteinExistence type="evidence at protein level"/>
<protein>
    <recommendedName>
        <fullName>Double C2-like domain-containing protein beta</fullName>
        <shortName>Doc2-beta</shortName>
    </recommendedName>
</protein>
<keyword id="KW-0106">Calcium</keyword>
<keyword id="KW-0111">Calcium/phospholipid-binding</keyword>
<keyword id="KW-1003">Cell membrane</keyword>
<keyword id="KW-0963">Cytoplasm</keyword>
<keyword id="KW-0472">Membrane</keyword>
<keyword id="KW-0479">Metal-binding</keyword>
<keyword id="KW-0597">Phosphoprotein</keyword>
<keyword id="KW-1267">Proteomics identification</keyword>
<keyword id="KW-1185">Reference proteome</keyword>
<keyword id="KW-0677">Repeat</keyword>
<comment type="function">
    <text evidence="1 8">Calcium sensor which positively regulates SNARE-dependent fusion of vesicles with membranes. Binds phospholipids in a calcium-dependent manner and may act at the priming stage of fusion by modifying membrane curvature to stimulate fusion. Involved in calcium-triggered exocytosis in chromaffin cells and calcium-dependent spontaneous release of neurotransmitter in absence of action potentials in neuronal cells. Involved both in glucose-stimulated insulin secretion in pancreatic cells and insulin-dependent GLUT4 transport to the plasma membrane in adipocytes (By similarity).</text>
</comment>
<comment type="cofactor">
    <cofactor evidence="3">
        <name>Ca(2+)</name>
        <dbReference type="ChEBI" id="CHEBI:29108"/>
    </cofactor>
</comment>
<comment type="subunit">
    <text evidence="1 8">Interacts with the SNARE (soluble N-ethylmaleimide-sensitive factor attached protein receptor) complex composed of SNAP25, STX1A and VAMP2; the interaction is calcium-dependent and competitive with SYT1. Interacts with STX4; the interaction is calcium-dependent, increased by insulin and glucose, and mediates vesicle fusion with plasma membrane in pancreatic cells and adipocytes. Interacts with STXBP3; the interaction is direct, occurs at the cell membrane and regulates glucose-stimulated insulin secretion. May interact with UNC13A; the interaction mediates targeting to the plasma membrane (By similarity). Interacts with cytoplasmic dynein light chain DYNLT1.</text>
</comment>
<comment type="subcellular location">
    <subcellularLocation>
        <location>Cytoplasm</location>
    </subcellularLocation>
    <subcellularLocation>
        <location evidence="1">Cytoplasmic granule</location>
    </subcellularLocation>
    <subcellularLocation>
        <location evidence="1">Cell membrane</location>
        <topology evidence="1">Peripheral membrane protein</topology>
    </subcellularLocation>
    <text evidence="1">Translocates to the plasma membrane in a calcium-dependent manner.</text>
</comment>
<comment type="tissue specificity">
    <text evidence="5 7">Widely expressed with highest levels in brain and kidney. Expressed in pancreatic islet cells (at protein level).</text>
</comment>
<comment type="domain">
    <text evidence="1">C2 domain 1 is involved in binding calcium and phospholipids. C2 domain 2 may also play a role in the calcium-dependent targeting to membranes (By similarity).</text>
</comment>